<sequence length="56" mass="6592">MVWSRGQRRKMAQENPKMHNSEISKALGADWKLLSDAQKRPFIDEAKRLRAVHMKD</sequence>
<keyword id="KW-0010">Activator</keyword>
<keyword id="KW-0238">DNA-binding</keyword>
<keyword id="KW-0539">Nucleus</keyword>
<keyword id="KW-0804">Transcription</keyword>
<keyword id="KW-0805">Transcription regulation</keyword>
<feature type="chain" id="PRO_0000048714" description="Transcription factor SOX-1">
    <location>
        <begin position="1" status="less than"/>
        <end position="56" status="greater than"/>
    </location>
</feature>
<feature type="DNA-binding region" description="HMG box" evidence="2">
    <location>
        <begin position="1" status="less than"/>
        <end position="56" status="greater than"/>
    </location>
</feature>
<feature type="region of interest" description="Disordered" evidence="3">
    <location>
        <begin position="1"/>
        <end position="22"/>
    </location>
</feature>
<feature type="compositionally biased region" description="Basic residues" evidence="3">
    <location>
        <begin position="1"/>
        <end position="10"/>
    </location>
</feature>
<feature type="non-terminal residue">
    <location>
        <position position="1"/>
    </location>
</feature>
<feature type="non-terminal residue">
    <location>
        <position position="56"/>
    </location>
</feature>
<accession>P37839</accession>
<gene>
    <name type="primary">SOX1</name>
</gene>
<comment type="function">
    <text evidence="1">Transcriptional activator.</text>
</comment>
<comment type="subcellular location">
    <subcellularLocation>
        <location evidence="4">Nucleus</location>
    </subcellularLocation>
</comment>
<organism>
    <name type="scientific">Pleurodeles waltl</name>
    <name type="common">Iberian ribbed newt</name>
    <dbReference type="NCBI Taxonomy" id="8319"/>
    <lineage>
        <taxon>Eukaryota</taxon>
        <taxon>Metazoa</taxon>
        <taxon>Chordata</taxon>
        <taxon>Craniata</taxon>
        <taxon>Vertebrata</taxon>
        <taxon>Euteleostomi</taxon>
        <taxon>Amphibia</taxon>
        <taxon>Batrachia</taxon>
        <taxon>Caudata</taxon>
        <taxon>Salamandroidea</taxon>
        <taxon>Salamandridae</taxon>
        <taxon>Pleurodelinae</taxon>
        <taxon>Pleurodeles</taxon>
    </lineage>
</organism>
<reference key="1">
    <citation type="journal article" date="1993" name="Nucleic Acids Res.">
        <title>Pw Sox-1: the first member of the Sox gene family in Urodeles.</title>
        <authorList>
            <person name="Chardard D."/>
            <person name="Chesnel A."/>
            <person name="Goze C."/>
            <person name="Dournon C."/>
            <person name="Berta P."/>
        </authorList>
    </citation>
    <scope>NUCLEOTIDE SEQUENCE [GENOMIC DNA]</scope>
</reference>
<name>SOX1_PLEWA</name>
<dbReference type="EMBL" id="L19159">
    <property type="protein sequence ID" value="AAA49615.1"/>
    <property type="status" value="ALT_SEQ"/>
    <property type="molecule type" value="Genomic_DNA"/>
</dbReference>
<dbReference type="PIR" id="S35645">
    <property type="entry name" value="S35645"/>
</dbReference>
<dbReference type="SMR" id="P37839"/>
<dbReference type="GO" id="GO:0005634">
    <property type="term" value="C:nucleus"/>
    <property type="evidence" value="ECO:0007669"/>
    <property type="project" value="UniProtKB-SubCell"/>
</dbReference>
<dbReference type="GO" id="GO:0001228">
    <property type="term" value="F:DNA-binding transcription activator activity, RNA polymerase II-specific"/>
    <property type="evidence" value="ECO:0007669"/>
    <property type="project" value="TreeGrafter"/>
</dbReference>
<dbReference type="GO" id="GO:0000978">
    <property type="term" value="F:RNA polymerase II cis-regulatory region sequence-specific DNA binding"/>
    <property type="evidence" value="ECO:0007669"/>
    <property type="project" value="TreeGrafter"/>
</dbReference>
<dbReference type="GO" id="GO:0007420">
    <property type="term" value="P:brain development"/>
    <property type="evidence" value="ECO:0007669"/>
    <property type="project" value="TreeGrafter"/>
</dbReference>
<dbReference type="GO" id="GO:0000122">
    <property type="term" value="P:negative regulation of transcription by RNA polymerase II"/>
    <property type="evidence" value="ECO:0007669"/>
    <property type="project" value="TreeGrafter"/>
</dbReference>
<dbReference type="GO" id="GO:0030182">
    <property type="term" value="P:neuron differentiation"/>
    <property type="evidence" value="ECO:0007669"/>
    <property type="project" value="TreeGrafter"/>
</dbReference>
<dbReference type="FunFam" id="1.10.30.10:FF:000002">
    <property type="entry name" value="transcription factor Sox-2"/>
    <property type="match status" value="1"/>
</dbReference>
<dbReference type="Gene3D" id="1.10.30.10">
    <property type="entry name" value="High mobility group box domain"/>
    <property type="match status" value="1"/>
</dbReference>
<dbReference type="InterPro" id="IPR009071">
    <property type="entry name" value="HMG_box_dom"/>
</dbReference>
<dbReference type="InterPro" id="IPR036910">
    <property type="entry name" value="HMG_box_dom_sf"/>
</dbReference>
<dbReference type="InterPro" id="IPR050140">
    <property type="entry name" value="SRY-related_HMG-box_TF-like"/>
</dbReference>
<dbReference type="PANTHER" id="PTHR10270">
    <property type="entry name" value="SOX TRANSCRIPTION FACTOR"/>
    <property type="match status" value="1"/>
</dbReference>
<dbReference type="PANTHER" id="PTHR10270:SF231">
    <property type="entry name" value="TRANSCRIPTION FACTOR SOX-2"/>
    <property type="match status" value="1"/>
</dbReference>
<dbReference type="Pfam" id="PF00505">
    <property type="entry name" value="HMG_box"/>
    <property type="match status" value="1"/>
</dbReference>
<dbReference type="SMART" id="SM00398">
    <property type="entry name" value="HMG"/>
    <property type="match status" value="1"/>
</dbReference>
<dbReference type="SUPFAM" id="SSF47095">
    <property type="entry name" value="HMG-box"/>
    <property type="match status" value="1"/>
</dbReference>
<dbReference type="PROSITE" id="PS50118">
    <property type="entry name" value="HMG_BOX_2"/>
    <property type="match status" value="1"/>
</dbReference>
<protein>
    <recommendedName>
        <fullName>Transcription factor SOX-1</fullName>
    </recommendedName>
</protein>
<proteinExistence type="inferred from homology"/>
<evidence type="ECO:0000250" key="1"/>
<evidence type="ECO:0000255" key="2">
    <source>
        <dbReference type="PROSITE-ProRule" id="PRU00267"/>
    </source>
</evidence>
<evidence type="ECO:0000256" key="3">
    <source>
        <dbReference type="SAM" id="MobiDB-lite"/>
    </source>
</evidence>
<evidence type="ECO:0000305" key="4"/>